<organism>
    <name type="scientific">Mycobacterium tuberculosis (strain CDC 1551 / Oshkosh)</name>
    <dbReference type="NCBI Taxonomy" id="83331"/>
    <lineage>
        <taxon>Bacteria</taxon>
        <taxon>Bacillati</taxon>
        <taxon>Actinomycetota</taxon>
        <taxon>Actinomycetes</taxon>
        <taxon>Mycobacteriales</taxon>
        <taxon>Mycobacteriaceae</taxon>
        <taxon>Mycobacterium</taxon>
        <taxon>Mycobacterium tuberculosis complex</taxon>
    </lineage>
</organism>
<evidence type="ECO:0000255" key="1">
    <source>
        <dbReference type="HAMAP-Rule" id="MF_00031"/>
    </source>
</evidence>
<comment type="function">
    <text evidence="1">The RuvA-RuvB-RuvC complex processes Holliday junction (HJ) DNA during genetic recombination and DNA repair, while the RuvA-RuvB complex plays an important role in the rescue of blocked DNA replication forks via replication fork reversal (RFR). RuvA specifically binds to HJ cruciform DNA, conferring on it an open structure. The RuvB hexamer acts as an ATP-dependent pump, pulling dsDNA into and through the RuvAB complex. HJ branch migration allows RuvC to scan DNA until it finds its consensus sequence, where it cleaves and resolves the cruciform DNA.</text>
</comment>
<comment type="subunit">
    <text evidence="1">Homotetramer. Forms an RuvA(8)-RuvB(12)-Holliday junction (HJ) complex. HJ DNA is sandwiched between 2 RuvA tetramers; dsDNA enters through RuvA and exits via RuvB. An RuvB hexamer assembles on each DNA strand where it exits the tetramer. Each RuvB hexamer is contacted by two RuvA subunits (via domain III) on 2 adjacent RuvB subunits; this complex drives branch migration. In the full resolvosome a probable DNA-RuvA(4)-RuvB(12)-RuvC(2) complex forms which resolves the HJ.</text>
</comment>
<comment type="subcellular location">
    <subcellularLocation>
        <location evidence="1">Cytoplasm</location>
    </subcellularLocation>
</comment>
<comment type="domain">
    <text evidence="1">Has three domains with a flexible linker between the domains II and III and assumes an 'L' shape. Domain III is highly mobile and contacts RuvB.</text>
</comment>
<comment type="similarity">
    <text evidence="1">Belongs to the RuvA family.</text>
</comment>
<feature type="chain" id="PRO_0000428292" description="Holliday junction branch migration complex subunit RuvA">
    <location>
        <begin position="1"/>
        <end position="196"/>
    </location>
</feature>
<feature type="region of interest" description="Domain I" evidence="1">
    <location>
        <begin position="1"/>
        <end position="63"/>
    </location>
</feature>
<feature type="region of interest" description="Domain II" evidence="1">
    <location>
        <begin position="64"/>
        <end position="138"/>
    </location>
</feature>
<feature type="region of interest" description="Flexible linker" evidence="1">
    <location>
        <begin position="138"/>
        <end position="142"/>
    </location>
</feature>
<feature type="region of interest" description="Domain III" evidence="1">
    <location>
        <begin position="143"/>
        <end position="196"/>
    </location>
</feature>
<keyword id="KW-0963">Cytoplasm</keyword>
<keyword id="KW-0227">DNA damage</keyword>
<keyword id="KW-0233">DNA recombination</keyword>
<keyword id="KW-0234">DNA repair</keyword>
<keyword id="KW-0238">DNA-binding</keyword>
<keyword id="KW-1185">Reference proteome</keyword>
<dbReference type="EMBL" id="AE000516">
    <property type="protein sequence ID" value="AAK46984.1"/>
    <property type="molecule type" value="Genomic_DNA"/>
</dbReference>
<dbReference type="PIR" id="H70726">
    <property type="entry name" value="H70726"/>
</dbReference>
<dbReference type="RefSeq" id="WP_003413421.1">
    <property type="nucleotide sequence ID" value="NZ_KK341227.1"/>
</dbReference>
<dbReference type="SMR" id="P9WGW2"/>
<dbReference type="GeneID" id="45426595"/>
<dbReference type="KEGG" id="mtc:MT2670"/>
<dbReference type="PATRIC" id="fig|83331.31.peg.2877"/>
<dbReference type="HOGENOM" id="CLU_087936_2_1_11"/>
<dbReference type="Proteomes" id="UP000001020">
    <property type="component" value="Chromosome"/>
</dbReference>
<dbReference type="GO" id="GO:0005737">
    <property type="term" value="C:cytoplasm"/>
    <property type="evidence" value="ECO:0007669"/>
    <property type="project" value="UniProtKB-SubCell"/>
</dbReference>
<dbReference type="GO" id="GO:0009379">
    <property type="term" value="C:Holliday junction helicase complex"/>
    <property type="evidence" value="ECO:0007669"/>
    <property type="project" value="InterPro"/>
</dbReference>
<dbReference type="GO" id="GO:0048476">
    <property type="term" value="C:Holliday junction resolvase complex"/>
    <property type="evidence" value="ECO:0007669"/>
    <property type="project" value="UniProtKB-UniRule"/>
</dbReference>
<dbReference type="GO" id="GO:0005524">
    <property type="term" value="F:ATP binding"/>
    <property type="evidence" value="ECO:0007669"/>
    <property type="project" value="InterPro"/>
</dbReference>
<dbReference type="GO" id="GO:0000400">
    <property type="term" value="F:four-way junction DNA binding"/>
    <property type="evidence" value="ECO:0007669"/>
    <property type="project" value="UniProtKB-UniRule"/>
</dbReference>
<dbReference type="GO" id="GO:0009378">
    <property type="term" value="F:four-way junction helicase activity"/>
    <property type="evidence" value="ECO:0007669"/>
    <property type="project" value="InterPro"/>
</dbReference>
<dbReference type="GO" id="GO:0006310">
    <property type="term" value="P:DNA recombination"/>
    <property type="evidence" value="ECO:0007669"/>
    <property type="project" value="UniProtKB-UniRule"/>
</dbReference>
<dbReference type="GO" id="GO:0006281">
    <property type="term" value="P:DNA repair"/>
    <property type="evidence" value="ECO:0007669"/>
    <property type="project" value="UniProtKB-UniRule"/>
</dbReference>
<dbReference type="CDD" id="cd14332">
    <property type="entry name" value="UBA_RuvA_C"/>
    <property type="match status" value="1"/>
</dbReference>
<dbReference type="FunFam" id="1.10.150.20:FF:000093">
    <property type="entry name" value="Holliday junction ATP-dependent DNA helicase RuvA"/>
    <property type="match status" value="1"/>
</dbReference>
<dbReference type="FunFam" id="2.40.50.140:FF:000083">
    <property type="entry name" value="Holliday junction ATP-dependent DNA helicase RuvA"/>
    <property type="match status" value="1"/>
</dbReference>
<dbReference type="Gene3D" id="1.10.150.20">
    <property type="entry name" value="5' to 3' exonuclease, C-terminal subdomain"/>
    <property type="match status" value="1"/>
</dbReference>
<dbReference type="Gene3D" id="1.10.8.10">
    <property type="entry name" value="DNA helicase RuvA subunit, C-terminal domain"/>
    <property type="match status" value="1"/>
</dbReference>
<dbReference type="Gene3D" id="2.40.50.140">
    <property type="entry name" value="Nucleic acid-binding proteins"/>
    <property type="match status" value="1"/>
</dbReference>
<dbReference type="HAMAP" id="MF_00031">
    <property type="entry name" value="DNA_HJ_migration_RuvA"/>
    <property type="match status" value="1"/>
</dbReference>
<dbReference type="InterPro" id="IPR013849">
    <property type="entry name" value="DNA_helicase_Holl-junc_RuvA_I"/>
</dbReference>
<dbReference type="InterPro" id="IPR003583">
    <property type="entry name" value="Hlx-hairpin-Hlx_DNA-bd_motif"/>
</dbReference>
<dbReference type="InterPro" id="IPR012340">
    <property type="entry name" value="NA-bd_OB-fold"/>
</dbReference>
<dbReference type="InterPro" id="IPR000085">
    <property type="entry name" value="RuvA"/>
</dbReference>
<dbReference type="InterPro" id="IPR010994">
    <property type="entry name" value="RuvA_2-like"/>
</dbReference>
<dbReference type="InterPro" id="IPR011114">
    <property type="entry name" value="RuvA_C"/>
</dbReference>
<dbReference type="InterPro" id="IPR036267">
    <property type="entry name" value="RuvA_C_sf"/>
</dbReference>
<dbReference type="NCBIfam" id="TIGR00084">
    <property type="entry name" value="ruvA"/>
    <property type="match status" value="1"/>
</dbReference>
<dbReference type="Pfam" id="PF14520">
    <property type="entry name" value="HHH_5"/>
    <property type="match status" value="1"/>
</dbReference>
<dbReference type="Pfam" id="PF07499">
    <property type="entry name" value="RuvA_C"/>
    <property type="match status" value="1"/>
</dbReference>
<dbReference type="Pfam" id="PF01330">
    <property type="entry name" value="RuvA_N"/>
    <property type="match status" value="1"/>
</dbReference>
<dbReference type="SMART" id="SM00278">
    <property type="entry name" value="HhH1"/>
    <property type="match status" value="2"/>
</dbReference>
<dbReference type="SUPFAM" id="SSF46929">
    <property type="entry name" value="DNA helicase RuvA subunit, C-terminal domain"/>
    <property type="match status" value="1"/>
</dbReference>
<dbReference type="SUPFAM" id="SSF50249">
    <property type="entry name" value="Nucleic acid-binding proteins"/>
    <property type="match status" value="1"/>
</dbReference>
<dbReference type="SUPFAM" id="SSF47781">
    <property type="entry name" value="RuvA domain 2-like"/>
    <property type="match status" value="1"/>
</dbReference>
<gene>
    <name evidence="1" type="primary">ruvA</name>
    <name type="ordered locus">MT2670</name>
</gene>
<accession>P9WGW2</accession>
<accession>L0TBQ6</accession>
<accession>P66744</accession>
<accession>Q50628</accession>
<sequence length="196" mass="20189">MIASVRGEVLEVALDHVVIEAAGVGYRVNATPATLATLRQGTEARLITAMIVREDSMTLYGFPDGETRDLFLTLLSVSGVGPRLAMAALAVHDAPALRQVLADGNVAALTRVPGIGKRGAERMVLELRDKVGVAATGGALSTNGHAVRSPVVEALVGLGFAAKQAEEATDTVLAANHDATTSSALRSALSLLGKAR</sequence>
<protein>
    <recommendedName>
        <fullName evidence="1">Holliday junction branch migration complex subunit RuvA</fullName>
    </recommendedName>
</protein>
<proteinExistence type="inferred from homology"/>
<name>RUVA_MYCTO</name>
<reference key="1">
    <citation type="journal article" date="2002" name="J. Bacteriol.">
        <title>Whole-genome comparison of Mycobacterium tuberculosis clinical and laboratory strains.</title>
        <authorList>
            <person name="Fleischmann R.D."/>
            <person name="Alland D."/>
            <person name="Eisen J.A."/>
            <person name="Carpenter L."/>
            <person name="White O."/>
            <person name="Peterson J.D."/>
            <person name="DeBoy R.T."/>
            <person name="Dodson R.J."/>
            <person name="Gwinn M.L."/>
            <person name="Haft D.H."/>
            <person name="Hickey E.K."/>
            <person name="Kolonay J.F."/>
            <person name="Nelson W.C."/>
            <person name="Umayam L.A."/>
            <person name="Ermolaeva M.D."/>
            <person name="Salzberg S.L."/>
            <person name="Delcher A."/>
            <person name="Utterback T.R."/>
            <person name="Weidman J.F."/>
            <person name="Khouri H.M."/>
            <person name="Gill J."/>
            <person name="Mikula A."/>
            <person name="Bishai W."/>
            <person name="Jacobs W.R. Jr."/>
            <person name="Venter J.C."/>
            <person name="Fraser C.M."/>
        </authorList>
    </citation>
    <scope>NUCLEOTIDE SEQUENCE [LARGE SCALE GENOMIC DNA]</scope>
    <source>
        <strain>CDC 1551 / Oshkosh</strain>
    </source>
</reference>